<gene>
    <name evidence="1" type="primary">fmt</name>
    <name type="ordered locus">CV_4264</name>
</gene>
<organism>
    <name type="scientific">Chromobacterium violaceum (strain ATCC 12472 / DSM 30191 / JCM 1249 / CCUG 213 / NBRC 12614 / NCIMB 9131 / NCTC 9757 / MK)</name>
    <dbReference type="NCBI Taxonomy" id="243365"/>
    <lineage>
        <taxon>Bacteria</taxon>
        <taxon>Pseudomonadati</taxon>
        <taxon>Pseudomonadota</taxon>
        <taxon>Betaproteobacteria</taxon>
        <taxon>Neisseriales</taxon>
        <taxon>Chromobacteriaceae</taxon>
        <taxon>Chromobacterium</taxon>
    </lineage>
</organism>
<sequence length="307" mass="32115">MKLIFAGTPEFAAAALRELIAAGHEIALVLTQPDRPAGRGMKLKPSPVKEVALAHGLRVEQPEKLRGNQEAQQMLRDIQADVMVVAAYGLILPQDVLDIPARGCLNIHASLLPRWRGAAPIQRAILAGDDETGITIMQMDVGLDTGDMLSIHPVAIAADETAATLHDKLAACGAQAIVETLGRLDRIVPRKQPEDGVTYAQKLSKAEAEVDWALPAEQVARAIRAYNPAPGAFTQLGGEPLKLWMASAEPGSAEPGAVVSADADGVLVGAGQGLVRVSVLQAAGGKRLAARDFVAGKSLPAGTRLGV</sequence>
<evidence type="ECO:0000255" key="1">
    <source>
        <dbReference type="HAMAP-Rule" id="MF_00182"/>
    </source>
</evidence>
<comment type="function">
    <text evidence="1">Attaches a formyl group to the free amino group of methionyl-tRNA(fMet). The formyl group appears to play a dual role in the initiator identity of N-formylmethionyl-tRNA by promoting its recognition by IF2 and preventing the misappropriation of this tRNA by the elongation apparatus.</text>
</comment>
<comment type="catalytic activity">
    <reaction evidence="1">
        <text>L-methionyl-tRNA(fMet) + (6R)-10-formyltetrahydrofolate = N-formyl-L-methionyl-tRNA(fMet) + (6S)-5,6,7,8-tetrahydrofolate + H(+)</text>
        <dbReference type="Rhea" id="RHEA:24380"/>
        <dbReference type="Rhea" id="RHEA-COMP:9952"/>
        <dbReference type="Rhea" id="RHEA-COMP:9953"/>
        <dbReference type="ChEBI" id="CHEBI:15378"/>
        <dbReference type="ChEBI" id="CHEBI:57453"/>
        <dbReference type="ChEBI" id="CHEBI:78530"/>
        <dbReference type="ChEBI" id="CHEBI:78844"/>
        <dbReference type="ChEBI" id="CHEBI:195366"/>
        <dbReference type="EC" id="2.1.2.9"/>
    </reaction>
</comment>
<comment type="similarity">
    <text evidence="1">Belongs to the Fmt family.</text>
</comment>
<name>FMT_CHRVO</name>
<keyword id="KW-0648">Protein biosynthesis</keyword>
<keyword id="KW-1185">Reference proteome</keyword>
<keyword id="KW-0808">Transferase</keyword>
<proteinExistence type="inferred from homology"/>
<feature type="chain" id="PRO_0000082948" description="Methionyl-tRNA formyltransferase">
    <location>
        <begin position="1"/>
        <end position="307"/>
    </location>
</feature>
<feature type="binding site" evidence="1">
    <location>
        <begin position="110"/>
        <end position="113"/>
    </location>
    <ligand>
        <name>(6S)-5,6,7,8-tetrahydrofolate</name>
        <dbReference type="ChEBI" id="CHEBI:57453"/>
    </ligand>
</feature>
<dbReference type="EC" id="2.1.2.9" evidence="1"/>
<dbReference type="EMBL" id="AE016825">
    <property type="protein sequence ID" value="AAQ61924.1"/>
    <property type="molecule type" value="Genomic_DNA"/>
</dbReference>
<dbReference type="RefSeq" id="WP_011137810.1">
    <property type="nucleotide sequence ID" value="NC_005085.1"/>
</dbReference>
<dbReference type="SMR" id="Q7NQ76"/>
<dbReference type="STRING" id="243365.CV_4264"/>
<dbReference type="KEGG" id="cvi:CV_4264"/>
<dbReference type="eggNOG" id="COG0223">
    <property type="taxonomic scope" value="Bacteria"/>
</dbReference>
<dbReference type="HOGENOM" id="CLU_033347_1_2_4"/>
<dbReference type="OrthoDB" id="9802815at2"/>
<dbReference type="Proteomes" id="UP000001424">
    <property type="component" value="Chromosome"/>
</dbReference>
<dbReference type="GO" id="GO:0005829">
    <property type="term" value="C:cytosol"/>
    <property type="evidence" value="ECO:0007669"/>
    <property type="project" value="TreeGrafter"/>
</dbReference>
<dbReference type="GO" id="GO:0004479">
    <property type="term" value="F:methionyl-tRNA formyltransferase activity"/>
    <property type="evidence" value="ECO:0007669"/>
    <property type="project" value="UniProtKB-UniRule"/>
</dbReference>
<dbReference type="CDD" id="cd08646">
    <property type="entry name" value="FMT_core_Met-tRNA-FMT_N"/>
    <property type="match status" value="1"/>
</dbReference>
<dbReference type="CDD" id="cd08704">
    <property type="entry name" value="Met_tRNA_FMT_C"/>
    <property type="match status" value="1"/>
</dbReference>
<dbReference type="FunFam" id="3.40.50.12230:FF:000001">
    <property type="entry name" value="Methionyl-tRNA formyltransferase"/>
    <property type="match status" value="1"/>
</dbReference>
<dbReference type="Gene3D" id="3.40.50.12230">
    <property type="match status" value="1"/>
</dbReference>
<dbReference type="HAMAP" id="MF_00182">
    <property type="entry name" value="Formyl_trans"/>
    <property type="match status" value="1"/>
</dbReference>
<dbReference type="InterPro" id="IPR005794">
    <property type="entry name" value="Fmt"/>
</dbReference>
<dbReference type="InterPro" id="IPR005793">
    <property type="entry name" value="Formyl_trans_C"/>
</dbReference>
<dbReference type="InterPro" id="IPR002376">
    <property type="entry name" value="Formyl_transf_N"/>
</dbReference>
<dbReference type="InterPro" id="IPR036477">
    <property type="entry name" value="Formyl_transf_N_sf"/>
</dbReference>
<dbReference type="InterPro" id="IPR011034">
    <property type="entry name" value="Formyl_transferase-like_C_sf"/>
</dbReference>
<dbReference type="InterPro" id="IPR001555">
    <property type="entry name" value="GART_AS"/>
</dbReference>
<dbReference type="InterPro" id="IPR044135">
    <property type="entry name" value="Met-tRNA-FMT_C"/>
</dbReference>
<dbReference type="InterPro" id="IPR041711">
    <property type="entry name" value="Met-tRNA-FMT_N"/>
</dbReference>
<dbReference type="NCBIfam" id="TIGR00460">
    <property type="entry name" value="fmt"/>
    <property type="match status" value="1"/>
</dbReference>
<dbReference type="PANTHER" id="PTHR11138">
    <property type="entry name" value="METHIONYL-TRNA FORMYLTRANSFERASE"/>
    <property type="match status" value="1"/>
</dbReference>
<dbReference type="PANTHER" id="PTHR11138:SF5">
    <property type="entry name" value="METHIONYL-TRNA FORMYLTRANSFERASE, MITOCHONDRIAL"/>
    <property type="match status" value="1"/>
</dbReference>
<dbReference type="Pfam" id="PF02911">
    <property type="entry name" value="Formyl_trans_C"/>
    <property type="match status" value="1"/>
</dbReference>
<dbReference type="Pfam" id="PF00551">
    <property type="entry name" value="Formyl_trans_N"/>
    <property type="match status" value="1"/>
</dbReference>
<dbReference type="SUPFAM" id="SSF50486">
    <property type="entry name" value="FMT C-terminal domain-like"/>
    <property type="match status" value="1"/>
</dbReference>
<dbReference type="SUPFAM" id="SSF53328">
    <property type="entry name" value="Formyltransferase"/>
    <property type="match status" value="1"/>
</dbReference>
<dbReference type="PROSITE" id="PS00373">
    <property type="entry name" value="GART"/>
    <property type="match status" value="1"/>
</dbReference>
<reference key="1">
    <citation type="journal article" date="2003" name="Proc. Natl. Acad. Sci. U.S.A.">
        <title>The complete genome sequence of Chromobacterium violaceum reveals remarkable and exploitable bacterial adaptability.</title>
        <authorList>
            <person name="Vasconcelos A.T.R."/>
            <person name="de Almeida D.F."/>
            <person name="Hungria M."/>
            <person name="Guimaraes C.T."/>
            <person name="Antonio R.V."/>
            <person name="Almeida F.C."/>
            <person name="de Almeida L.G.P."/>
            <person name="de Almeida R."/>
            <person name="Alves-Gomes J.A."/>
            <person name="Andrade E.M."/>
            <person name="Araripe J."/>
            <person name="de Araujo M.F.F."/>
            <person name="Astolfi-Filho S."/>
            <person name="Azevedo V."/>
            <person name="Baptista A.J."/>
            <person name="Bataus L.A.M."/>
            <person name="Batista J.S."/>
            <person name="Belo A."/>
            <person name="van den Berg C."/>
            <person name="Bogo M."/>
            <person name="Bonatto S."/>
            <person name="Bordignon J."/>
            <person name="Brigido M.M."/>
            <person name="Brito C.A."/>
            <person name="Brocchi M."/>
            <person name="Burity H.A."/>
            <person name="Camargo A.A."/>
            <person name="Cardoso D.D.P."/>
            <person name="Carneiro N.P."/>
            <person name="Carraro D.M."/>
            <person name="Carvalho C.M.B."/>
            <person name="Cascardo J.C.M."/>
            <person name="Cavada B.S."/>
            <person name="Chueire L.M.O."/>
            <person name="Creczynski-Pasa T.B."/>
            <person name="Cunha-Junior N.C."/>
            <person name="Fagundes N."/>
            <person name="Falcao C.L."/>
            <person name="Fantinatti F."/>
            <person name="Farias I.P."/>
            <person name="Felipe M.S.S."/>
            <person name="Ferrari L.P."/>
            <person name="Ferro J.A."/>
            <person name="Ferro M.I.T."/>
            <person name="Franco G.R."/>
            <person name="Freitas N.S.A."/>
            <person name="Furlan L.R."/>
            <person name="Gazzinelli R.T."/>
            <person name="Gomes E.A."/>
            <person name="Goncalves P.R."/>
            <person name="Grangeiro T.B."/>
            <person name="Grattapaglia D."/>
            <person name="Grisard E.C."/>
            <person name="Hanna E.S."/>
            <person name="Jardim S.N."/>
            <person name="Laurino J."/>
            <person name="Leoi L.C.T."/>
            <person name="Lima L.F.A."/>
            <person name="Loureiro M.F."/>
            <person name="Lyra M.C.C.P."/>
            <person name="Madeira H.M.F."/>
            <person name="Manfio G.P."/>
            <person name="Maranhao A.Q."/>
            <person name="Martins W.S."/>
            <person name="di Mauro S.M.Z."/>
            <person name="de Medeiros S.R.B."/>
            <person name="Meissner R.V."/>
            <person name="Moreira M.A.M."/>
            <person name="Nascimento F.F."/>
            <person name="Nicolas M.F."/>
            <person name="Oliveira J.G."/>
            <person name="Oliveira S.C."/>
            <person name="Paixao R.F.C."/>
            <person name="Parente J.A."/>
            <person name="Pedrosa F.O."/>
            <person name="Pena S.D.J."/>
            <person name="Pereira J.O."/>
            <person name="Pereira M."/>
            <person name="Pinto L.S.R.C."/>
            <person name="Pinto L.S."/>
            <person name="Porto J.I.R."/>
            <person name="Potrich D.P."/>
            <person name="Ramalho-Neto C.E."/>
            <person name="Reis A.M.M."/>
            <person name="Rigo L.U."/>
            <person name="Rondinelli E."/>
            <person name="Santos E.B.P."/>
            <person name="Santos F.R."/>
            <person name="Schneider M.P.C."/>
            <person name="Seuanez H.N."/>
            <person name="Silva A.M.R."/>
            <person name="da Silva A.L.C."/>
            <person name="Silva D.W."/>
            <person name="Silva R."/>
            <person name="Simoes I.C."/>
            <person name="Simon D."/>
            <person name="Soares C.M.A."/>
            <person name="Soares R.B.A."/>
            <person name="Souza E.M."/>
            <person name="Souza K.R.L."/>
            <person name="Souza R.C."/>
            <person name="Steffens M.B.R."/>
            <person name="Steindel M."/>
            <person name="Teixeira S.R."/>
            <person name="Urmenyi T."/>
            <person name="Vettore A."/>
            <person name="Wassem R."/>
            <person name="Zaha A."/>
            <person name="Simpson A.J.G."/>
        </authorList>
    </citation>
    <scope>NUCLEOTIDE SEQUENCE [LARGE SCALE GENOMIC DNA]</scope>
    <source>
        <strain>ATCC 12472 / DSM 30191 / JCM 1249 / CCUG 213 / NBRC 12614 / NCIMB 9131 / NCTC 9757 / MK</strain>
    </source>
</reference>
<accession>Q7NQ76</accession>
<protein>
    <recommendedName>
        <fullName evidence="1">Methionyl-tRNA formyltransferase</fullName>
        <ecNumber evidence="1">2.1.2.9</ecNumber>
    </recommendedName>
</protein>